<name>PYRH_MYCPA</name>
<dbReference type="EC" id="2.7.4.22" evidence="1"/>
<dbReference type="EMBL" id="AE016958">
    <property type="protein sequence ID" value="AAS05263.1"/>
    <property type="molecule type" value="Genomic_DNA"/>
</dbReference>
<dbReference type="RefSeq" id="WP_010949785.1">
    <property type="nucleotide sequence ID" value="NZ_CP106873.1"/>
</dbReference>
<dbReference type="SMR" id="Q73VR6"/>
<dbReference type="STRING" id="262316.MAP_2946c"/>
<dbReference type="KEGG" id="mpa:MAP_2946c"/>
<dbReference type="PATRIC" id="fig|262316.17.peg.3121"/>
<dbReference type="eggNOG" id="COG0528">
    <property type="taxonomic scope" value="Bacteria"/>
</dbReference>
<dbReference type="HOGENOM" id="CLU_033861_0_0_11"/>
<dbReference type="UniPathway" id="UPA00159">
    <property type="reaction ID" value="UER00275"/>
</dbReference>
<dbReference type="Proteomes" id="UP000000580">
    <property type="component" value="Chromosome"/>
</dbReference>
<dbReference type="GO" id="GO:0005737">
    <property type="term" value="C:cytoplasm"/>
    <property type="evidence" value="ECO:0007669"/>
    <property type="project" value="UniProtKB-SubCell"/>
</dbReference>
<dbReference type="GO" id="GO:0005524">
    <property type="term" value="F:ATP binding"/>
    <property type="evidence" value="ECO:0007669"/>
    <property type="project" value="UniProtKB-KW"/>
</dbReference>
<dbReference type="GO" id="GO:0033862">
    <property type="term" value="F:UMP kinase activity"/>
    <property type="evidence" value="ECO:0007669"/>
    <property type="project" value="UniProtKB-EC"/>
</dbReference>
<dbReference type="GO" id="GO:0044210">
    <property type="term" value="P:'de novo' CTP biosynthetic process"/>
    <property type="evidence" value="ECO:0007669"/>
    <property type="project" value="UniProtKB-UniRule"/>
</dbReference>
<dbReference type="GO" id="GO:0006225">
    <property type="term" value="P:UDP biosynthetic process"/>
    <property type="evidence" value="ECO:0007669"/>
    <property type="project" value="TreeGrafter"/>
</dbReference>
<dbReference type="CDD" id="cd04254">
    <property type="entry name" value="AAK_UMPK-PyrH-Ec"/>
    <property type="match status" value="1"/>
</dbReference>
<dbReference type="FunFam" id="3.40.1160.10:FF:000001">
    <property type="entry name" value="Uridylate kinase"/>
    <property type="match status" value="1"/>
</dbReference>
<dbReference type="Gene3D" id="3.40.1160.10">
    <property type="entry name" value="Acetylglutamate kinase-like"/>
    <property type="match status" value="1"/>
</dbReference>
<dbReference type="HAMAP" id="MF_01220_B">
    <property type="entry name" value="PyrH_B"/>
    <property type="match status" value="1"/>
</dbReference>
<dbReference type="InterPro" id="IPR036393">
    <property type="entry name" value="AceGlu_kinase-like_sf"/>
</dbReference>
<dbReference type="InterPro" id="IPR001048">
    <property type="entry name" value="Asp/Glu/Uridylate_kinase"/>
</dbReference>
<dbReference type="InterPro" id="IPR011817">
    <property type="entry name" value="Uridylate_kinase"/>
</dbReference>
<dbReference type="InterPro" id="IPR015963">
    <property type="entry name" value="Uridylate_kinase_bac"/>
</dbReference>
<dbReference type="NCBIfam" id="TIGR02075">
    <property type="entry name" value="pyrH_bact"/>
    <property type="match status" value="1"/>
</dbReference>
<dbReference type="PANTHER" id="PTHR42833">
    <property type="entry name" value="URIDYLATE KINASE"/>
    <property type="match status" value="1"/>
</dbReference>
<dbReference type="PANTHER" id="PTHR42833:SF4">
    <property type="entry name" value="URIDYLATE KINASE PUMPKIN, CHLOROPLASTIC"/>
    <property type="match status" value="1"/>
</dbReference>
<dbReference type="Pfam" id="PF00696">
    <property type="entry name" value="AA_kinase"/>
    <property type="match status" value="1"/>
</dbReference>
<dbReference type="PIRSF" id="PIRSF005650">
    <property type="entry name" value="Uridylate_kin"/>
    <property type="match status" value="1"/>
</dbReference>
<dbReference type="SUPFAM" id="SSF53633">
    <property type="entry name" value="Carbamate kinase-like"/>
    <property type="match status" value="1"/>
</dbReference>
<protein>
    <recommendedName>
        <fullName evidence="1">Uridylate kinase</fullName>
        <shortName evidence="1">UK</shortName>
        <ecNumber evidence="1">2.7.4.22</ecNumber>
    </recommendedName>
    <alternativeName>
        <fullName evidence="1">Uridine monophosphate kinase</fullName>
        <shortName evidence="1">UMP kinase</shortName>
        <shortName evidence="1">UMPK</shortName>
    </alternativeName>
</protein>
<feature type="chain" id="PRO_0000323886" description="Uridylate kinase">
    <location>
        <begin position="1"/>
        <end position="265"/>
    </location>
</feature>
<feature type="region of interest" description="Disordered" evidence="2">
    <location>
        <begin position="1"/>
        <end position="29"/>
    </location>
</feature>
<feature type="binding site" evidence="1">
    <location>
        <begin position="40"/>
        <end position="43"/>
    </location>
    <ligand>
        <name>ATP</name>
        <dbReference type="ChEBI" id="CHEBI:30616"/>
    </ligand>
</feature>
<feature type="binding site" evidence="1">
    <location>
        <position position="81"/>
    </location>
    <ligand>
        <name>UMP</name>
        <dbReference type="ChEBI" id="CHEBI:57865"/>
    </ligand>
</feature>
<feature type="binding site" evidence="1">
    <location>
        <position position="82"/>
    </location>
    <ligand>
        <name>ATP</name>
        <dbReference type="ChEBI" id="CHEBI:30616"/>
    </ligand>
</feature>
<feature type="binding site" evidence="1">
    <location>
        <position position="86"/>
    </location>
    <ligand>
        <name>ATP</name>
        <dbReference type="ChEBI" id="CHEBI:30616"/>
    </ligand>
</feature>
<feature type="binding site" evidence="1">
    <location>
        <position position="101"/>
    </location>
    <ligand>
        <name>UMP</name>
        <dbReference type="ChEBI" id="CHEBI:57865"/>
    </ligand>
</feature>
<feature type="binding site" evidence="1">
    <location>
        <begin position="162"/>
        <end position="169"/>
    </location>
    <ligand>
        <name>UMP</name>
        <dbReference type="ChEBI" id="CHEBI:57865"/>
    </ligand>
</feature>
<feature type="binding site" evidence="1">
    <location>
        <position position="195"/>
    </location>
    <ligand>
        <name>ATP</name>
        <dbReference type="ChEBI" id="CHEBI:30616"/>
    </ligand>
</feature>
<feature type="binding site" evidence="1">
    <location>
        <position position="198"/>
    </location>
    <ligand>
        <name>ATP</name>
        <dbReference type="ChEBI" id="CHEBI:30616"/>
    </ligand>
</feature>
<accession>Q73VR6</accession>
<gene>
    <name evidence="1" type="primary">pyrH</name>
    <name type="ordered locus">MAP_2946c</name>
</gene>
<evidence type="ECO:0000255" key="1">
    <source>
        <dbReference type="HAMAP-Rule" id="MF_01220"/>
    </source>
</evidence>
<evidence type="ECO:0000256" key="2">
    <source>
        <dbReference type="SAM" id="MobiDB-lite"/>
    </source>
</evidence>
<keyword id="KW-0067">ATP-binding</keyword>
<keyword id="KW-0963">Cytoplasm</keyword>
<keyword id="KW-0418">Kinase</keyword>
<keyword id="KW-0547">Nucleotide-binding</keyword>
<keyword id="KW-0665">Pyrimidine biosynthesis</keyword>
<keyword id="KW-1185">Reference proteome</keyword>
<keyword id="KW-0808">Transferase</keyword>
<sequence length="265" mass="28139">MTESREPHVAGSAAPRPEPANGLASGQPSSRARYSRVLLKLGGEMFGGGQVGLDPDVVAQVARQIAEVVRGGVQVAVVIGGGNFFRGAQLQQRGMERTRSDYMGMLGTVMNSLALQDFLEKEGIVTRVQTAITMGQVAEPYLPLRAVRHLEKGRVVIFGAGMGLPYFSTDTTAAQRALEIGAEVVLMAKAVDGVFSADPRQYPEAELITAISHREVIDRGLRVADATAFSLCMDNGMPILVFNLLTNGNIARAVGGEKIGTLVTT</sequence>
<reference key="1">
    <citation type="journal article" date="2005" name="Proc. Natl. Acad. Sci. U.S.A.">
        <title>The complete genome sequence of Mycobacterium avium subspecies paratuberculosis.</title>
        <authorList>
            <person name="Li L."/>
            <person name="Bannantine J.P."/>
            <person name="Zhang Q."/>
            <person name="Amonsin A."/>
            <person name="May B.J."/>
            <person name="Alt D."/>
            <person name="Banerji N."/>
            <person name="Kanjilal S."/>
            <person name="Kapur V."/>
        </authorList>
    </citation>
    <scope>NUCLEOTIDE SEQUENCE [LARGE SCALE GENOMIC DNA]</scope>
    <source>
        <strain>ATCC BAA-968 / K-10</strain>
    </source>
</reference>
<organism>
    <name type="scientific">Mycolicibacterium paratuberculosis (strain ATCC BAA-968 / K-10)</name>
    <name type="common">Mycobacterium paratuberculosis</name>
    <dbReference type="NCBI Taxonomy" id="262316"/>
    <lineage>
        <taxon>Bacteria</taxon>
        <taxon>Bacillati</taxon>
        <taxon>Actinomycetota</taxon>
        <taxon>Actinomycetes</taxon>
        <taxon>Mycobacteriales</taxon>
        <taxon>Mycobacteriaceae</taxon>
        <taxon>Mycobacterium</taxon>
        <taxon>Mycobacterium avium complex (MAC)</taxon>
    </lineage>
</organism>
<proteinExistence type="inferred from homology"/>
<comment type="function">
    <text evidence="1">Catalyzes the reversible phosphorylation of UMP to UDP.</text>
</comment>
<comment type="catalytic activity">
    <reaction evidence="1">
        <text>UMP + ATP = UDP + ADP</text>
        <dbReference type="Rhea" id="RHEA:24400"/>
        <dbReference type="ChEBI" id="CHEBI:30616"/>
        <dbReference type="ChEBI" id="CHEBI:57865"/>
        <dbReference type="ChEBI" id="CHEBI:58223"/>
        <dbReference type="ChEBI" id="CHEBI:456216"/>
        <dbReference type="EC" id="2.7.4.22"/>
    </reaction>
</comment>
<comment type="activity regulation">
    <text evidence="1">Inhibited by UTP.</text>
</comment>
<comment type="pathway">
    <text evidence="1">Pyrimidine metabolism; CTP biosynthesis via de novo pathway; UDP from UMP (UMPK route): step 1/1.</text>
</comment>
<comment type="subunit">
    <text evidence="1">Homohexamer.</text>
</comment>
<comment type="subcellular location">
    <subcellularLocation>
        <location evidence="1">Cytoplasm</location>
    </subcellularLocation>
</comment>
<comment type="similarity">
    <text evidence="1">Belongs to the UMP kinase family.</text>
</comment>